<comment type="function">
    <text evidence="1">Cell wall formation.</text>
</comment>
<comment type="catalytic activity">
    <reaction>
        <text>UDP-N-acetyl-alpha-D-muramate + NADP(+) = UDP-N-acetyl-3-O-(1-carboxyvinyl)-alpha-D-glucosamine + NADPH + H(+)</text>
        <dbReference type="Rhea" id="RHEA:12248"/>
        <dbReference type="ChEBI" id="CHEBI:15378"/>
        <dbReference type="ChEBI" id="CHEBI:57783"/>
        <dbReference type="ChEBI" id="CHEBI:58349"/>
        <dbReference type="ChEBI" id="CHEBI:68483"/>
        <dbReference type="ChEBI" id="CHEBI:70757"/>
        <dbReference type="EC" id="1.3.1.98"/>
    </reaction>
</comment>
<comment type="cofactor">
    <cofactor evidence="1">
        <name>FAD</name>
        <dbReference type="ChEBI" id="CHEBI:57692"/>
    </cofactor>
</comment>
<comment type="pathway">
    <text>Cell wall biogenesis; peptidoglycan biosynthesis.</text>
</comment>
<comment type="subcellular location">
    <subcellularLocation>
        <location evidence="1">Cytoplasm</location>
    </subcellularLocation>
</comment>
<comment type="similarity">
    <text evidence="2">Belongs to the MurB family.</text>
</comment>
<gene>
    <name type="primary">murB</name>
    <name type="ordered locus">BB_0598</name>
</gene>
<proteinExistence type="inferred from homology"/>
<protein>
    <recommendedName>
        <fullName>UDP-N-acetylenolpyruvoylglucosamine reductase</fullName>
        <ecNumber>1.3.1.98</ecNumber>
    </recommendedName>
    <alternativeName>
        <fullName>UDP-N-acetylmuramate dehydrogenase</fullName>
    </alternativeName>
</protein>
<keyword id="KW-0131">Cell cycle</keyword>
<keyword id="KW-0132">Cell division</keyword>
<keyword id="KW-0133">Cell shape</keyword>
<keyword id="KW-0961">Cell wall biogenesis/degradation</keyword>
<keyword id="KW-0963">Cytoplasm</keyword>
<keyword id="KW-0274">FAD</keyword>
<keyword id="KW-0285">Flavoprotein</keyword>
<keyword id="KW-0521">NADP</keyword>
<keyword id="KW-0560">Oxidoreductase</keyword>
<keyword id="KW-0573">Peptidoglycan synthesis</keyword>
<keyword id="KW-1185">Reference proteome</keyword>
<organism>
    <name type="scientific">Borreliella burgdorferi (strain ATCC 35210 / DSM 4680 / CIP 102532 / B31)</name>
    <name type="common">Borrelia burgdorferi</name>
    <dbReference type="NCBI Taxonomy" id="224326"/>
    <lineage>
        <taxon>Bacteria</taxon>
        <taxon>Pseudomonadati</taxon>
        <taxon>Spirochaetota</taxon>
        <taxon>Spirochaetia</taxon>
        <taxon>Spirochaetales</taxon>
        <taxon>Borreliaceae</taxon>
        <taxon>Borreliella</taxon>
    </lineage>
</organism>
<reference key="1">
    <citation type="journal article" date="1997" name="Nature">
        <title>Genomic sequence of a Lyme disease spirochaete, Borrelia burgdorferi.</title>
        <authorList>
            <person name="Fraser C.M."/>
            <person name="Casjens S."/>
            <person name="Huang W.M."/>
            <person name="Sutton G.G."/>
            <person name="Clayton R.A."/>
            <person name="Lathigra R."/>
            <person name="White O."/>
            <person name="Ketchum K.A."/>
            <person name="Dodson R.J."/>
            <person name="Hickey E.K."/>
            <person name="Gwinn M.L."/>
            <person name="Dougherty B.A."/>
            <person name="Tomb J.-F."/>
            <person name="Fleischmann R.D."/>
            <person name="Richardson D.L."/>
            <person name="Peterson J.D."/>
            <person name="Kerlavage A.R."/>
            <person name="Quackenbush J."/>
            <person name="Salzberg S.L."/>
            <person name="Hanson M."/>
            <person name="van Vugt R."/>
            <person name="Palmer N."/>
            <person name="Adams M.D."/>
            <person name="Gocayne J.D."/>
            <person name="Weidman J.F."/>
            <person name="Utterback T.R."/>
            <person name="Watthey L."/>
            <person name="McDonald L.A."/>
            <person name="Artiach P."/>
            <person name="Bowman C."/>
            <person name="Garland S.A."/>
            <person name="Fujii C."/>
            <person name="Cotton M.D."/>
            <person name="Horst K."/>
            <person name="Roberts K.M."/>
            <person name="Hatch B."/>
            <person name="Smith H.O."/>
            <person name="Venter J.C."/>
        </authorList>
    </citation>
    <scope>NUCLEOTIDE SEQUENCE [LARGE SCALE GENOMIC DNA]</scope>
    <source>
        <strain>ATCC 35210 / DSM 4680 / CIP 102532 / B31</strain>
    </source>
</reference>
<evidence type="ECO:0000250" key="1"/>
<evidence type="ECO:0000305" key="2"/>
<sequence length="302" mass="34182">MPKSLNNFLKKINIKPQTKNLANYTTYKIGNISKLFLTPKNIKEAENIFKAAIEEKIKLFILGGGSNILVNDEREIDFPIIYTGYLNKIEIHENKIVGECGADFESLCKIALDNSLSGLEFIYGLPGTLGGAVWMNARCFGNEISEILKKITFIDDKGKTICKEFKKEDFKYKISPFQNKNFFILKIELNLKKDNKKIIEEKMNKNKQARINRGHYLFPSGGSTFKNNKAFLKPSGQIIEECKLKGLSIGGATVSKYHGNFIININNATSKDIKSLIEKVKAEVYLKTGLLLEEEVLYIGFK</sequence>
<feature type="chain" id="PRO_0000179181" description="UDP-N-acetylenolpyruvoylglucosamine reductase">
    <location>
        <begin position="1"/>
        <end position="302"/>
    </location>
</feature>
<feature type="domain" description="FAD-binding PCMH-type">
    <location>
        <begin position="28"/>
        <end position="194"/>
    </location>
</feature>
<feature type="active site" description="Proton donor" evidence="1">
    <location>
        <position position="223"/>
    </location>
</feature>
<feature type="active site" evidence="1">
    <location>
        <position position="295"/>
    </location>
</feature>
<name>MURB_BORBU</name>
<accession>O51544</accession>
<dbReference type="EC" id="1.3.1.98"/>
<dbReference type="EMBL" id="AE000783">
    <property type="protein sequence ID" value="AAC66953.1"/>
    <property type="molecule type" value="Genomic_DNA"/>
</dbReference>
<dbReference type="PIR" id="E70174">
    <property type="entry name" value="E70174"/>
</dbReference>
<dbReference type="RefSeq" id="NP_212732.1">
    <property type="nucleotide sequence ID" value="NC_001318.1"/>
</dbReference>
<dbReference type="RefSeq" id="WP_010889775.1">
    <property type="nucleotide sequence ID" value="NC_001318.1"/>
</dbReference>
<dbReference type="SMR" id="O51544"/>
<dbReference type="STRING" id="224326.BB_0598"/>
<dbReference type="PaxDb" id="224326-BB_0598"/>
<dbReference type="EnsemblBacteria" id="AAC66953">
    <property type="protein sequence ID" value="AAC66953"/>
    <property type="gene ID" value="BB_0598"/>
</dbReference>
<dbReference type="KEGG" id="bbu:BB_0598"/>
<dbReference type="PATRIC" id="fig|224326.49.peg.989"/>
<dbReference type="HOGENOM" id="CLU_035304_1_1_12"/>
<dbReference type="OrthoDB" id="9804753at2"/>
<dbReference type="UniPathway" id="UPA00219"/>
<dbReference type="Proteomes" id="UP000001807">
    <property type="component" value="Chromosome"/>
</dbReference>
<dbReference type="GO" id="GO:0005829">
    <property type="term" value="C:cytosol"/>
    <property type="evidence" value="ECO:0007669"/>
    <property type="project" value="TreeGrafter"/>
</dbReference>
<dbReference type="GO" id="GO:0071949">
    <property type="term" value="F:FAD binding"/>
    <property type="evidence" value="ECO:0007669"/>
    <property type="project" value="InterPro"/>
</dbReference>
<dbReference type="GO" id="GO:0008762">
    <property type="term" value="F:UDP-N-acetylmuramate dehydrogenase activity"/>
    <property type="evidence" value="ECO:0007669"/>
    <property type="project" value="UniProtKB-UniRule"/>
</dbReference>
<dbReference type="GO" id="GO:0051301">
    <property type="term" value="P:cell division"/>
    <property type="evidence" value="ECO:0007669"/>
    <property type="project" value="UniProtKB-KW"/>
</dbReference>
<dbReference type="GO" id="GO:0071555">
    <property type="term" value="P:cell wall organization"/>
    <property type="evidence" value="ECO:0007669"/>
    <property type="project" value="UniProtKB-KW"/>
</dbReference>
<dbReference type="GO" id="GO:0009252">
    <property type="term" value="P:peptidoglycan biosynthetic process"/>
    <property type="evidence" value="ECO:0007669"/>
    <property type="project" value="UniProtKB-UniRule"/>
</dbReference>
<dbReference type="GO" id="GO:0008360">
    <property type="term" value="P:regulation of cell shape"/>
    <property type="evidence" value="ECO:0007669"/>
    <property type="project" value="UniProtKB-KW"/>
</dbReference>
<dbReference type="Gene3D" id="3.30.465.10">
    <property type="match status" value="1"/>
</dbReference>
<dbReference type="Gene3D" id="3.90.78.10">
    <property type="entry name" value="UDP-N-acetylenolpyruvoylglucosamine reductase, C-terminal domain"/>
    <property type="match status" value="1"/>
</dbReference>
<dbReference type="Gene3D" id="3.30.43.10">
    <property type="entry name" value="Uridine Diphospho-n-acetylenolpyruvylglucosamine Reductase, domain 2"/>
    <property type="match status" value="1"/>
</dbReference>
<dbReference type="HAMAP" id="MF_00037">
    <property type="entry name" value="MurB"/>
    <property type="match status" value="1"/>
</dbReference>
<dbReference type="InterPro" id="IPR016166">
    <property type="entry name" value="FAD-bd_PCMH"/>
</dbReference>
<dbReference type="InterPro" id="IPR036318">
    <property type="entry name" value="FAD-bd_PCMH-like_sf"/>
</dbReference>
<dbReference type="InterPro" id="IPR016167">
    <property type="entry name" value="FAD-bd_PCMH_sub1"/>
</dbReference>
<dbReference type="InterPro" id="IPR016169">
    <property type="entry name" value="FAD-bd_PCMH_sub2"/>
</dbReference>
<dbReference type="InterPro" id="IPR003170">
    <property type="entry name" value="MurB"/>
</dbReference>
<dbReference type="InterPro" id="IPR011601">
    <property type="entry name" value="MurB_C"/>
</dbReference>
<dbReference type="InterPro" id="IPR036635">
    <property type="entry name" value="MurB_C_sf"/>
</dbReference>
<dbReference type="InterPro" id="IPR006094">
    <property type="entry name" value="Oxid_FAD_bind_N"/>
</dbReference>
<dbReference type="NCBIfam" id="TIGR00179">
    <property type="entry name" value="murB"/>
    <property type="match status" value="1"/>
</dbReference>
<dbReference type="NCBIfam" id="NF010480">
    <property type="entry name" value="PRK13905.1"/>
    <property type="match status" value="1"/>
</dbReference>
<dbReference type="PANTHER" id="PTHR21071">
    <property type="entry name" value="UDP-N-ACETYLENOLPYRUVOYLGLUCOSAMINE REDUCTASE"/>
    <property type="match status" value="1"/>
</dbReference>
<dbReference type="PANTHER" id="PTHR21071:SF4">
    <property type="entry name" value="UDP-N-ACETYLENOLPYRUVOYLGLUCOSAMINE REDUCTASE"/>
    <property type="match status" value="1"/>
</dbReference>
<dbReference type="Pfam" id="PF01565">
    <property type="entry name" value="FAD_binding_4"/>
    <property type="match status" value="1"/>
</dbReference>
<dbReference type="Pfam" id="PF02873">
    <property type="entry name" value="MurB_C"/>
    <property type="match status" value="1"/>
</dbReference>
<dbReference type="SUPFAM" id="SSF56176">
    <property type="entry name" value="FAD-binding/transporter-associated domain-like"/>
    <property type="match status" value="1"/>
</dbReference>
<dbReference type="SUPFAM" id="SSF56194">
    <property type="entry name" value="Uridine diphospho-N-Acetylenolpyruvylglucosamine reductase, MurB, C-terminal domain"/>
    <property type="match status" value="1"/>
</dbReference>
<dbReference type="PROSITE" id="PS51387">
    <property type="entry name" value="FAD_PCMH"/>
    <property type="match status" value="1"/>
</dbReference>